<comment type="function">
    <molecule>Pre-protein VI</molecule>
    <text evidence="1">During virus assembly, promotes hexon trimers nuclear import through nuclear pore complexes via an importin alpha/beta-dependent mechanism. By analogy to herpesviruses capsid assembly, might act as a chaperone to promote the formation of the icosahedral capsid.</text>
</comment>
<comment type="function">
    <molecule>Endosome lysis protein</molecule>
    <text evidence="1">Structural component of the virion that provides increased stability to the particle shell through its interaction with the core-capsid bridging protein and the hexon-linking protein VIII. Fibers shedding during virus entry into host cell allows the endosome lysis protein to be exposed as a membrane-lytic peptide. Exhibits pH-independent membrane fragmentation activity and probably mediates viral rapid escape from host endosome via organellar membrane lysis. It is not clear if it then remains partially associated with the capsid and involved in the intracellular microtubule-dependent transport of capsid to the nucleus, or if it is lost during endosomal penetration.</text>
</comment>
<comment type="function">
    <molecule>Protease cofactor</molecule>
    <text evidence="1">Cofactor that activates the viral protease. Binds to viral protease in a 1:1 ratio.</text>
</comment>
<comment type="subunit">
    <molecule>Pre-protein VI</molecule>
    <text evidence="1">Interacts with hexon protein; this interaction allows nuclear import of hexon trimers and possibly pre-capsid assembly. Interacts (via C-terminal NLS) with importin alpha/beta.</text>
</comment>
<comment type="subunit">
    <molecule>Endosome lysis protein</molecule>
    <text evidence="1">Interacts (via PPxY motif) with host NEDD4 ubiquitine ligase; this interaction might play a role in virus intracellular transport during entry. Part of a complex composed of the core-capsid bridging protein, the endosome lysis protein VI and the hexon-linking protein VIII; these interactions bridge the virus core to the capsid. Interacts with peripentonal hexons; this interaction stabilizes the capsid by gluing two peripentonal hexons together and joining them with an adjacent group-of-nine hexon.</text>
</comment>
<comment type="subunit">
    <molecule>Protease cofactor</molecule>
    <text evidence="1">Heterodimer with the viral protease; disulfide-linked. Interacts with the viral protease.</text>
</comment>
<comment type="subcellular location">
    <molecule>Pre-protein VI</molecule>
    <subcellularLocation>
        <location evidence="1">Host nucleus</location>
    </subcellularLocation>
    <subcellularLocation>
        <location evidence="1">Host cytoplasm</location>
    </subcellularLocation>
    <text evidence="1">Shuttles between host cytoplasm and nucleus.</text>
</comment>
<comment type="subcellular location">
    <molecule>Endosome lysis protein</molecule>
    <subcellularLocation>
        <location evidence="1">Virion</location>
    </subcellularLocation>
    <text evidence="1">Associates with the base of each peripentonal hexon on the capsid interior. Present in around 360 copies per virion.</text>
</comment>
<comment type="induction">
    <text evidence="1">Expressed in the late phase of the viral replicative cycle.</text>
</comment>
<comment type="domain">
    <text evidence="1">N-terminal amphipathic alpha-helix domain is essential for the membrane lytic activity.</text>
</comment>
<comment type="domain">
    <text evidence="1">Late-budding domains (L domains) are short sequence motifs essential for viral particle release. They can occur individually or in close proximity within structural proteins. They interacts with sorting cellular proteins of the multivesicular body (MVB) pathway. Most of these proteins are class E vacuolar protein sorting factors belonging to ESCRT-I, ESCRT-II or ESCRT-III complexes. Minor capsid protein 6 contains one L domain: a PPXY motif which binds to the WW domains of HECT (homologous to E6-AP C-terminus) E3 ubiquitin ligases, like NEDD4. In adenoviruses, this motif seems to play a role in microtubule-dependent intracellular trafficking toward the nucleus during virus entry into host cell and in suppression of DAXX-mediated repression of the immediate early E1A promoter.</text>
</comment>
<comment type="PTM">
    <text evidence="1">Ubiquitinated by Nedd4 following partial capsid disassembly; which might play a role in intracellular virus movement during entry.</text>
</comment>
<comment type="PTM">
    <molecule>Protease cofactor</molecule>
    <text evidence="1">Contains the major nuclear import and export signals. Proteolytically removed during virion maturation. The processing of the C-terminus turns the precursor into a mature viral structural protein and abrogates its ability to promote hexon import and act as a potential chaperone protein.</text>
</comment>
<comment type="miscellaneous">
    <text evidence="1">All late proteins expressed from the major late promoter are produced by alternative splicing and alternative polyadenylation of the same gene giving rise to non-overlapping ORFs. A leader sequence is present in the N-terminus of all these mRNAs and is recognized by the viral shutoff protein to provide expression although conventional translation via ribosome scanning from the cap has been shut off in the host cell.</text>
</comment>
<comment type="similarity">
    <text evidence="1">Belongs to the adenoviridae protein VI family.</text>
</comment>
<sequence>MAYSRLAPHCGLPVYGHHIGNSEMSGGFSWSSLGSSLSSGLSRIGSFLGSTAQRIGNSQGFQQAKEGFLKSGVLENVGSLAGQTVSSLADIGRLKLESDLQKLRERALGAQQQQLPPLTQEQLAQLLASTQTELPSSAPAVPMPIPAPVPPLVTGVRPGQMRPEVLPPDRGVALGPLIEEPAPRPIAVPGSRPRKRKRVRGWGSALEDMLGDGVCYRSKRYCY</sequence>
<gene>
    <name evidence="1" type="primary">L3</name>
</gene>
<organismHost>
    <name type="scientific">Pantherophis guttatus</name>
    <name type="common">Corn snake</name>
    <name type="synonym">Elaphe guttata</name>
    <dbReference type="NCBI Taxonomy" id="94885"/>
</organismHost>
<protein>
    <recommendedName>
        <fullName evidence="1">Pre-protein VI</fullName>
        <shortName evidence="1">pVI</shortName>
    </recommendedName>
    <component>
        <recommendedName>
            <fullName evidence="1">Endosome lysis protein</fullName>
        </recommendedName>
    </component>
    <component>
        <recommendedName>
            <fullName evidence="1">Protease cofactor</fullName>
        </recommendedName>
        <alternativeName>
            <fullName evidence="1">pVI-C</fullName>
        </alternativeName>
    </component>
</protein>
<name>CAP6_ADES1</name>
<accession>Q8JN68</accession>
<feature type="chain" id="PRO_0000421433" description="Pre-protein VI" evidence="1">
    <location>
        <begin position="1"/>
        <end position="223"/>
    </location>
</feature>
<feature type="propeptide" id="PRO_0000036569" evidence="1">
    <location>
        <begin position="1"/>
        <end position="27"/>
    </location>
</feature>
<feature type="chain" id="PRO_0000036570" description="Endosome lysis protein" evidence="1">
    <location>
        <begin position="28"/>
        <end position="212"/>
    </location>
</feature>
<feature type="chain" id="PRO_0000439556" description="Protease cofactor" evidence="1">
    <location>
        <begin position="213"/>
        <end position="223"/>
    </location>
</feature>
<feature type="region of interest" description="Amphipathic alpha-helix essential for membrane lytic activity" evidence="1">
    <location>
        <begin position="28"/>
        <end position="51"/>
    </location>
</feature>
<feature type="region of interest" description="Involved in endosomal membrane lysis" evidence="1">
    <location>
        <begin position="29"/>
        <end position="50"/>
    </location>
</feature>
<feature type="region of interest" description="Interaction with hexon protein" evidence="1">
    <location>
        <begin position="45"/>
        <end position="71"/>
    </location>
</feature>
<feature type="region of interest" description="Interaction with hexon protein" evidence="1">
    <location>
        <begin position="206"/>
        <end position="212"/>
    </location>
</feature>
<feature type="region of interest" description="Binds to importin alpha/beta, involved in hexon nuclear import" evidence="1">
    <location>
        <begin position="213"/>
        <end position="223"/>
    </location>
</feature>
<feature type="short sequence motif" description="Nuclear export signal" evidence="1">
    <location>
        <begin position="64"/>
        <end position="73"/>
    </location>
</feature>
<feature type="short sequence motif" description="Nuclear export signal" evidence="1">
    <location>
        <begin position="204"/>
        <end position="215"/>
    </location>
</feature>
<feature type="site" description="Cleavage; by viral protease" evidence="1">
    <location>
        <begin position="27"/>
        <end position="28"/>
    </location>
</feature>
<feature type="site" description="Cleavage; by viral protease" evidence="1">
    <location>
        <begin position="212"/>
        <end position="213"/>
    </location>
</feature>
<feature type="disulfide bond" description="Interchain (with Adenovirus protease)" evidence="1">
    <location>
        <position position="222"/>
    </location>
</feature>
<evidence type="ECO:0000255" key="1">
    <source>
        <dbReference type="HAMAP-Rule" id="MF_04048"/>
    </source>
</evidence>
<keyword id="KW-0167">Capsid protein</keyword>
<keyword id="KW-1176">Cytoplasmic inwards viral transport</keyword>
<keyword id="KW-1015">Disulfide bond</keyword>
<keyword id="KW-1035">Host cytoplasm</keyword>
<keyword id="KW-1048">Host nucleus</keyword>
<keyword id="KW-0945">Host-virus interaction</keyword>
<keyword id="KW-0426">Late protein</keyword>
<keyword id="KW-1177">Microtubular inwards viral transport</keyword>
<keyword id="KW-0597">Phosphoprotein</keyword>
<keyword id="KW-1185">Reference proteome</keyword>
<keyword id="KW-0832">Ubl conjugation</keyword>
<keyword id="KW-0118">Viral capsid assembly</keyword>
<keyword id="KW-1162">Viral penetration into host cytoplasm</keyword>
<keyword id="KW-1174">Viral penetration via lysis of host organellar membrane</keyword>
<keyword id="KW-1188">Viral release from host cell</keyword>
<keyword id="KW-0946">Virion</keyword>
<keyword id="KW-1160">Virus entry into host cell</keyword>
<proteinExistence type="inferred from homology"/>
<organism>
    <name type="scientific">Snake adenovirus serotype 1</name>
    <name type="common">SnAdV-1</name>
    <dbReference type="NCBI Taxonomy" id="189830"/>
    <lineage>
        <taxon>Viruses</taxon>
        <taxon>Varidnaviria</taxon>
        <taxon>Bamfordvirae</taxon>
        <taxon>Preplasmiviricota</taxon>
        <taxon>Tectiliviricetes</taxon>
        <taxon>Rowavirales</taxon>
        <taxon>Adenoviridae</taxon>
        <taxon>Atadenovirus</taxon>
        <taxon>Snake atadenovirus A</taxon>
    </lineage>
</organism>
<dbReference type="EMBL" id="DQ106414">
    <property type="protein sequence ID" value="AAL92451.1"/>
    <property type="molecule type" value="Genomic_DNA"/>
</dbReference>
<dbReference type="RefSeq" id="YP_001552254.1">
    <property type="nucleotide sequence ID" value="NC_009989.1"/>
</dbReference>
<dbReference type="KEGG" id="vg:10973868"/>
<dbReference type="OrthoDB" id="16676at10239"/>
<dbReference type="Proteomes" id="UP000136605">
    <property type="component" value="Genome"/>
</dbReference>
<dbReference type="GO" id="GO:0043657">
    <property type="term" value="C:host cell"/>
    <property type="evidence" value="ECO:0007669"/>
    <property type="project" value="GOC"/>
</dbReference>
<dbReference type="GO" id="GO:0030430">
    <property type="term" value="C:host cell cytoplasm"/>
    <property type="evidence" value="ECO:0007669"/>
    <property type="project" value="UniProtKB-SubCell"/>
</dbReference>
<dbReference type="GO" id="GO:0042025">
    <property type="term" value="C:host cell nucleus"/>
    <property type="evidence" value="ECO:0007669"/>
    <property type="project" value="UniProtKB-SubCell"/>
</dbReference>
<dbReference type="GO" id="GO:0019028">
    <property type="term" value="C:viral capsid"/>
    <property type="evidence" value="ECO:0007669"/>
    <property type="project" value="UniProtKB-UniRule"/>
</dbReference>
<dbReference type="GO" id="GO:0046729">
    <property type="term" value="C:viral procapsid"/>
    <property type="evidence" value="ECO:0007669"/>
    <property type="project" value="UniProtKB-UniRule"/>
</dbReference>
<dbReference type="GO" id="GO:0039664">
    <property type="term" value="P:lysis of host organelle involved in viral entry into host cell"/>
    <property type="evidence" value="ECO:0007669"/>
    <property type="project" value="UniProtKB-UniRule"/>
</dbReference>
<dbReference type="GO" id="GO:0075521">
    <property type="term" value="P:microtubule-dependent intracellular transport of viral material towards nucleus"/>
    <property type="evidence" value="ECO:0007669"/>
    <property type="project" value="UniProtKB-UniRule"/>
</dbReference>
<dbReference type="GO" id="GO:0019076">
    <property type="term" value="P:viral release from host cell"/>
    <property type="evidence" value="ECO:0007669"/>
    <property type="project" value="UniProtKB-UniRule"/>
</dbReference>
<dbReference type="HAMAP" id="MF_04048">
    <property type="entry name" value="ADV_CAP6"/>
    <property type="match status" value="1"/>
</dbReference>
<dbReference type="InterPro" id="IPR004243">
    <property type="entry name" value="McpVI"/>
</dbReference>
<dbReference type="Pfam" id="PF02993">
    <property type="entry name" value="MCPVI"/>
    <property type="match status" value="1"/>
</dbReference>
<reference key="1">
    <citation type="journal article" date="2002" name="J. Gen. Virol.">
        <title>Genetic analysis of an adenovirus isolated from corn snake (Elaphe guttata) implies common origin with the members of the proposed new genus Atadenovirus.</title>
        <authorList>
            <person name="Farkas S.L."/>
            <person name="Benko M."/>
            <person name="Elo P.T."/>
            <person name="Ursu K."/>
            <person name="Dan A."/>
            <person name="Ahne W."/>
            <person name="Harrach B."/>
        </authorList>
    </citation>
    <scope>NUCLEOTIDE SEQUENCE [GENOMIC DNA]</scope>
</reference>